<comment type="function">
    <text evidence="1">Could be a nuclease involved in processing of the 5'-end of pre-16S rRNA.</text>
</comment>
<comment type="subcellular location">
    <subcellularLocation>
        <location evidence="1">Cytoplasm</location>
    </subcellularLocation>
</comment>
<comment type="similarity">
    <text evidence="1">Belongs to the YqgF nuclease family.</text>
</comment>
<dbReference type="EC" id="3.1.-.-" evidence="1"/>
<dbReference type="EMBL" id="CP001393">
    <property type="protein sequence ID" value="ACM60311.1"/>
    <property type="molecule type" value="Genomic_DNA"/>
</dbReference>
<dbReference type="RefSeq" id="WP_015907703.1">
    <property type="nucleotide sequence ID" value="NC_012034.1"/>
</dbReference>
<dbReference type="SMR" id="B9MRK7"/>
<dbReference type="STRING" id="521460.Athe_1211"/>
<dbReference type="GeneID" id="31772559"/>
<dbReference type="KEGG" id="ate:Athe_1211"/>
<dbReference type="eggNOG" id="COG0816">
    <property type="taxonomic scope" value="Bacteria"/>
</dbReference>
<dbReference type="HOGENOM" id="CLU_098240_2_0_9"/>
<dbReference type="Proteomes" id="UP000007723">
    <property type="component" value="Chromosome"/>
</dbReference>
<dbReference type="GO" id="GO:0005829">
    <property type="term" value="C:cytosol"/>
    <property type="evidence" value="ECO:0007669"/>
    <property type="project" value="TreeGrafter"/>
</dbReference>
<dbReference type="GO" id="GO:0004518">
    <property type="term" value="F:nuclease activity"/>
    <property type="evidence" value="ECO:0007669"/>
    <property type="project" value="UniProtKB-KW"/>
</dbReference>
<dbReference type="GO" id="GO:0000967">
    <property type="term" value="P:rRNA 5'-end processing"/>
    <property type="evidence" value="ECO:0007669"/>
    <property type="project" value="UniProtKB-UniRule"/>
</dbReference>
<dbReference type="CDD" id="cd16964">
    <property type="entry name" value="YqgF"/>
    <property type="match status" value="1"/>
</dbReference>
<dbReference type="Gene3D" id="3.30.420.140">
    <property type="entry name" value="YqgF/RNase H-like domain"/>
    <property type="match status" value="1"/>
</dbReference>
<dbReference type="HAMAP" id="MF_00651">
    <property type="entry name" value="Nuclease_YqgF"/>
    <property type="match status" value="1"/>
</dbReference>
<dbReference type="InterPro" id="IPR012337">
    <property type="entry name" value="RNaseH-like_sf"/>
</dbReference>
<dbReference type="InterPro" id="IPR005227">
    <property type="entry name" value="YqgF"/>
</dbReference>
<dbReference type="InterPro" id="IPR006641">
    <property type="entry name" value="YqgF/RNaseH-like_dom"/>
</dbReference>
<dbReference type="InterPro" id="IPR037027">
    <property type="entry name" value="YqgF/RNaseH-like_dom_sf"/>
</dbReference>
<dbReference type="NCBIfam" id="TIGR00250">
    <property type="entry name" value="RNAse_H_YqgF"/>
    <property type="match status" value="1"/>
</dbReference>
<dbReference type="PANTHER" id="PTHR33317">
    <property type="entry name" value="POLYNUCLEOTIDYL TRANSFERASE, RIBONUCLEASE H-LIKE SUPERFAMILY PROTEIN"/>
    <property type="match status" value="1"/>
</dbReference>
<dbReference type="PANTHER" id="PTHR33317:SF4">
    <property type="entry name" value="POLYNUCLEOTIDYL TRANSFERASE, RIBONUCLEASE H-LIKE SUPERFAMILY PROTEIN"/>
    <property type="match status" value="1"/>
</dbReference>
<dbReference type="Pfam" id="PF03652">
    <property type="entry name" value="RuvX"/>
    <property type="match status" value="1"/>
</dbReference>
<dbReference type="SMART" id="SM00732">
    <property type="entry name" value="YqgFc"/>
    <property type="match status" value="1"/>
</dbReference>
<dbReference type="SUPFAM" id="SSF53098">
    <property type="entry name" value="Ribonuclease H-like"/>
    <property type="match status" value="1"/>
</dbReference>
<proteinExistence type="inferred from homology"/>
<keyword id="KW-0963">Cytoplasm</keyword>
<keyword id="KW-0378">Hydrolase</keyword>
<keyword id="KW-0540">Nuclease</keyword>
<keyword id="KW-0690">Ribosome biogenesis</keyword>
<gene>
    <name type="ordered locus">Athe_1211</name>
</gene>
<protein>
    <recommendedName>
        <fullName evidence="1">Putative pre-16S rRNA nuclease</fullName>
        <ecNumber evidence="1">3.1.-.-</ecNumber>
    </recommendedName>
</protein>
<evidence type="ECO:0000255" key="1">
    <source>
        <dbReference type="HAMAP-Rule" id="MF_00651"/>
    </source>
</evidence>
<name>YQGF_CALBD</name>
<feature type="chain" id="PRO_1000147458" description="Putative pre-16S rRNA nuclease">
    <location>
        <begin position="1"/>
        <end position="138"/>
    </location>
</feature>
<sequence length="138" mass="16061">MRILCLDIGNSRVGVAISDPLKITAQPVMTIELRNKDLFEELDKIFQGYNIEKVVIGYPLSKLHPDQKDEKLKKIDEISEKIGSRYNVEIVKWDERFSTKAVERVIDEELNWKRKKKIIDKVAAVYILQGYLDFYNGS</sequence>
<accession>B9MRK7</accession>
<organism>
    <name type="scientific">Caldicellulosiruptor bescii (strain ATCC BAA-1888 / DSM 6725 / KCTC 15123 / Z-1320)</name>
    <name type="common">Anaerocellum thermophilum</name>
    <dbReference type="NCBI Taxonomy" id="521460"/>
    <lineage>
        <taxon>Bacteria</taxon>
        <taxon>Bacillati</taxon>
        <taxon>Bacillota</taxon>
        <taxon>Bacillota incertae sedis</taxon>
        <taxon>Caldicellulosiruptorales</taxon>
        <taxon>Caldicellulosiruptoraceae</taxon>
        <taxon>Caldicellulosiruptor</taxon>
    </lineage>
</organism>
<reference key="1">
    <citation type="submission" date="2009-01" db="EMBL/GenBank/DDBJ databases">
        <title>Complete sequence of chromosome of Caldicellulosiruptor becscii DSM 6725.</title>
        <authorList>
            <person name="Lucas S."/>
            <person name="Copeland A."/>
            <person name="Lapidus A."/>
            <person name="Glavina del Rio T."/>
            <person name="Tice H."/>
            <person name="Bruce D."/>
            <person name="Goodwin L."/>
            <person name="Pitluck S."/>
            <person name="Sims D."/>
            <person name="Meincke L."/>
            <person name="Brettin T."/>
            <person name="Detter J.C."/>
            <person name="Han C."/>
            <person name="Larimer F."/>
            <person name="Land M."/>
            <person name="Hauser L."/>
            <person name="Kyrpides N."/>
            <person name="Ovchinnikova G."/>
            <person name="Kataeva I."/>
            <person name="Adams M.W.W."/>
        </authorList>
    </citation>
    <scope>NUCLEOTIDE SEQUENCE [LARGE SCALE GENOMIC DNA]</scope>
    <source>
        <strain>ATCC BAA-1888 / DSM 6725 / KCTC 15123 / Z-1320</strain>
    </source>
</reference>